<sequence>MATQLPSPTATTSHSGNEPRRVIRESCNNCSAQKIRCGKQRPACARCVNKKLQCNYSYSQRSGRRSSSMNTQRGGPHIAFLPGIPDTPATMPDANAMSAMYGSLTTSSPGLQGTTLSPSIETSLEYDQNPFEDPNQYHDLTFDFLASPPNTEPLHSRSTSSNTGTDMGDTAMVDSEAFWHSFPSMPPQNLDALRSVSNHPIFDQDQVASFRRSLEKTVQHGHDCMALALQVVNDLSVTREPCLVATSNPMTGIETHQMQARDVDTVLFINRDAAQSVKKILDCSCSSDQAVSLACYLATSKIVDWYGAAIEAVGERTEDFSKNAGPKTSQGIMAERIIARPIYMGKYCLDPEVQRVVRAQVVLGELKEHVQPLLNSLPRFHITGLEAESDSSANGQQACILRNQLRNVIQSARDLNGTGSS</sequence>
<name>ELCR_PHANO</name>
<reference key="1">
    <citation type="journal article" date="2007" name="Plant Cell">
        <title>Dothideomycete-plant interactions illuminated by genome sequencing and EST analysis of the wheat pathogen Stagonospora nodorum.</title>
        <authorList>
            <person name="Hane J.K."/>
            <person name="Lowe R.G.T."/>
            <person name="Solomon P.S."/>
            <person name="Tan K.-C."/>
            <person name="Schoch C.L."/>
            <person name="Spatafora J.W."/>
            <person name="Crous P.W."/>
            <person name="Kodira C.D."/>
            <person name="Birren B.W."/>
            <person name="Galagan J.E."/>
            <person name="Torriani S.F.F."/>
            <person name="McDonald B.A."/>
            <person name="Oliver R.P."/>
        </authorList>
    </citation>
    <scope>NUCLEOTIDE SEQUENCE [LARGE SCALE GENOMIC DNA]</scope>
    <source>
        <strain>SN15 / ATCC MYA-4574 / FGSC 10173</strain>
    </source>
</reference>
<reference key="2">
    <citation type="journal article" date="2017" name="Environ. Microbiol.">
        <title>Functional genomics-guided discovery of a light-activated phytotoxin in the wheat pathogen Parastagonospora nodorum via pathway activation.</title>
        <authorList>
            <person name="Chooi Y.H."/>
            <person name="Zhang G."/>
            <person name="Hu J."/>
            <person name="Muria-Gonzalez M.J."/>
            <person name="Tran P.N."/>
            <person name="Pettitt A."/>
            <person name="Maier A.G."/>
            <person name="Barrow R.A."/>
            <person name="Solomon P.S."/>
        </authorList>
    </citation>
    <scope>INDUCTION</scope>
    <scope>FUNCTION</scope>
</reference>
<keyword id="KW-0238">DNA-binding</keyword>
<keyword id="KW-0479">Metal-binding</keyword>
<keyword id="KW-0539">Nucleus</keyword>
<keyword id="KW-0804">Transcription</keyword>
<keyword id="KW-0805">Transcription regulation</keyword>
<keyword id="KW-0862">Zinc</keyword>
<accession>Q0UI05</accession>
<gene>
    <name evidence="4" type="primary">elcR</name>
    <name type="ORF">SNOG_08609</name>
</gene>
<proteinExistence type="evidence at transcript level"/>
<organism>
    <name type="scientific">Phaeosphaeria nodorum (strain SN15 / ATCC MYA-4574 / FGSC 10173)</name>
    <name type="common">Glume blotch fungus</name>
    <name type="synonym">Parastagonospora nodorum</name>
    <dbReference type="NCBI Taxonomy" id="321614"/>
    <lineage>
        <taxon>Eukaryota</taxon>
        <taxon>Fungi</taxon>
        <taxon>Dikarya</taxon>
        <taxon>Ascomycota</taxon>
        <taxon>Pezizomycotina</taxon>
        <taxon>Dothideomycetes</taxon>
        <taxon>Pleosporomycetidae</taxon>
        <taxon>Pleosporales</taxon>
        <taxon>Pleosporineae</taxon>
        <taxon>Phaeosphaeriaceae</taxon>
        <taxon>Parastagonospora</taxon>
    </lineage>
</organism>
<comment type="function">
    <text evidence="3">Transcription regulator of the gene cluster that mediates the biosynthesis of elsinochrome C, a perelyenequinone phytotoxin structurally similar to cercosporin.</text>
</comment>
<comment type="subcellular location">
    <subcellularLocation>
        <location evidence="1">Nucleus</location>
    </subcellularLocation>
</comment>
<feature type="chain" id="PRO_0000449873" description="Elsinochrome C biosynthesis regulatory protein elcR">
    <location>
        <begin position="1"/>
        <end position="421"/>
    </location>
</feature>
<feature type="DNA-binding region" description="Zn(2)-C6 fungal-type" evidence="1">
    <location>
        <begin position="27"/>
        <end position="54"/>
    </location>
</feature>
<feature type="region of interest" description="Disordered" evidence="2">
    <location>
        <begin position="1"/>
        <end position="20"/>
    </location>
</feature>
<feature type="compositionally biased region" description="Polar residues" evidence="2">
    <location>
        <begin position="1"/>
        <end position="16"/>
    </location>
</feature>
<dbReference type="EMBL" id="CH445337">
    <property type="protein sequence ID" value="EAT83777.2"/>
    <property type="molecule type" value="Genomic_DNA"/>
</dbReference>
<dbReference type="RefSeq" id="XP_001798918.1">
    <property type="nucleotide sequence ID" value="XM_001798866.1"/>
</dbReference>
<dbReference type="SMR" id="Q0UI05"/>
<dbReference type="EnsemblFungi" id="SNOT_08609">
    <property type="protein sequence ID" value="SNOT_08609"/>
    <property type="gene ID" value="SNOG_08609"/>
</dbReference>
<dbReference type="GeneID" id="5975817"/>
<dbReference type="KEGG" id="pno:SNOG_08609"/>
<dbReference type="VEuPathDB" id="FungiDB:JI435_086090"/>
<dbReference type="eggNOG" id="ENOG502SUW5">
    <property type="taxonomic scope" value="Eukaryota"/>
</dbReference>
<dbReference type="HOGENOM" id="CLU_051725_0_0_1"/>
<dbReference type="InParanoid" id="Q0UI05"/>
<dbReference type="OrthoDB" id="2328572at2759"/>
<dbReference type="PHI-base" id="PHI:7001"/>
<dbReference type="Proteomes" id="UP000001055">
    <property type="component" value="Unassembled WGS sequence"/>
</dbReference>
<dbReference type="GO" id="GO:0005634">
    <property type="term" value="C:nucleus"/>
    <property type="evidence" value="ECO:0007669"/>
    <property type="project" value="UniProtKB-SubCell"/>
</dbReference>
<dbReference type="GO" id="GO:0003677">
    <property type="term" value="F:DNA binding"/>
    <property type="evidence" value="ECO:0007669"/>
    <property type="project" value="UniProtKB-KW"/>
</dbReference>
<dbReference type="GO" id="GO:0000981">
    <property type="term" value="F:DNA-binding transcription factor activity, RNA polymerase II-specific"/>
    <property type="evidence" value="ECO:0007669"/>
    <property type="project" value="InterPro"/>
</dbReference>
<dbReference type="GO" id="GO:0008270">
    <property type="term" value="F:zinc ion binding"/>
    <property type="evidence" value="ECO:0007669"/>
    <property type="project" value="InterPro"/>
</dbReference>
<dbReference type="GO" id="GO:0045122">
    <property type="term" value="P:aflatoxin biosynthetic process"/>
    <property type="evidence" value="ECO:0007669"/>
    <property type="project" value="InterPro"/>
</dbReference>
<dbReference type="CDD" id="cd00067">
    <property type="entry name" value="GAL4"/>
    <property type="match status" value="1"/>
</dbReference>
<dbReference type="Gene3D" id="4.10.240.10">
    <property type="entry name" value="Zn(2)-C6 fungal-type DNA-binding domain"/>
    <property type="match status" value="1"/>
</dbReference>
<dbReference type="InterPro" id="IPR013700">
    <property type="entry name" value="AflR"/>
</dbReference>
<dbReference type="InterPro" id="IPR050675">
    <property type="entry name" value="OAF3"/>
</dbReference>
<dbReference type="InterPro" id="IPR036864">
    <property type="entry name" value="Zn2-C6_fun-type_DNA-bd_sf"/>
</dbReference>
<dbReference type="InterPro" id="IPR001138">
    <property type="entry name" value="Zn2Cys6_DnaBD"/>
</dbReference>
<dbReference type="PANTHER" id="PTHR31069:SF31">
    <property type="entry name" value="MONODICTYPHENONE CLUSTER TRANSCRIPTION FACTOR-RELATED"/>
    <property type="match status" value="1"/>
</dbReference>
<dbReference type="PANTHER" id="PTHR31069">
    <property type="entry name" value="OLEATE-ACTIVATED TRANSCRIPTION FACTOR 1-RELATED"/>
    <property type="match status" value="1"/>
</dbReference>
<dbReference type="Pfam" id="PF08493">
    <property type="entry name" value="AflR"/>
    <property type="match status" value="1"/>
</dbReference>
<dbReference type="Pfam" id="PF00172">
    <property type="entry name" value="Zn_clus"/>
    <property type="match status" value="1"/>
</dbReference>
<dbReference type="PRINTS" id="PR00755">
    <property type="entry name" value="AFLATOXINBRP"/>
</dbReference>
<dbReference type="SMART" id="SM00066">
    <property type="entry name" value="GAL4"/>
    <property type="match status" value="1"/>
</dbReference>
<dbReference type="SUPFAM" id="SSF57701">
    <property type="entry name" value="Zn2/Cys6 DNA-binding domain"/>
    <property type="match status" value="1"/>
</dbReference>
<dbReference type="PROSITE" id="PS00463">
    <property type="entry name" value="ZN2_CY6_FUNGAL_1"/>
    <property type="match status" value="1"/>
</dbReference>
<dbReference type="PROSITE" id="PS50048">
    <property type="entry name" value="ZN2_CY6_FUNGAL_2"/>
    <property type="match status" value="1"/>
</dbReference>
<evidence type="ECO:0000255" key="1">
    <source>
        <dbReference type="PROSITE-ProRule" id="PRU00227"/>
    </source>
</evidence>
<evidence type="ECO:0000256" key="2">
    <source>
        <dbReference type="SAM" id="MobiDB-lite"/>
    </source>
</evidence>
<evidence type="ECO:0000269" key="3">
    <source>
    </source>
</evidence>
<evidence type="ECO:0000303" key="4">
    <source>
    </source>
</evidence>
<protein>
    <recommendedName>
        <fullName evidence="4">Elsinochrome C biosynthesis regulatory protein elcR</fullName>
    </recommendedName>
    <alternativeName>
        <fullName evidence="4">Elsinochrome C biosynthesis cluster protein R</fullName>
    </alternativeName>
</protein>